<feature type="chain" id="PRO_0000299437" description="UPF0478 protein SA1560">
    <location>
        <begin position="1"/>
        <end position="163"/>
    </location>
</feature>
<feature type="transmembrane region" description="Helical" evidence="1">
    <location>
        <begin position="7"/>
        <end position="27"/>
    </location>
</feature>
<accession>Q7A531</accession>
<sequence>MDWILPIAGIIAAIAFLILCIGIVAVLNSVKKNLDYVAKTLDGVEGQVQGITRETTDLLHKVNRLTEDIQGKVDRLNSVVDAVKGIGDSVQTLNSSVDRVTNSITHNISQNEDKISQVVQWSNVAMEIADKWQNRHYRRGSANYKANNVATDANHSYTSRVDK</sequence>
<reference key="1">
    <citation type="journal article" date="2001" name="Lancet">
        <title>Whole genome sequencing of meticillin-resistant Staphylococcus aureus.</title>
        <authorList>
            <person name="Kuroda M."/>
            <person name="Ohta T."/>
            <person name="Uchiyama I."/>
            <person name="Baba T."/>
            <person name="Yuzawa H."/>
            <person name="Kobayashi I."/>
            <person name="Cui L."/>
            <person name="Oguchi A."/>
            <person name="Aoki K."/>
            <person name="Nagai Y."/>
            <person name="Lian J.-Q."/>
            <person name="Ito T."/>
            <person name="Kanamori M."/>
            <person name="Matsumaru H."/>
            <person name="Maruyama A."/>
            <person name="Murakami H."/>
            <person name="Hosoyama A."/>
            <person name="Mizutani-Ui Y."/>
            <person name="Takahashi N.K."/>
            <person name="Sawano T."/>
            <person name="Inoue R."/>
            <person name="Kaito C."/>
            <person name="Sekimizu K."/>
            <person name="Hirakawa H."/>
            <person name="Kuhara S."/>
            <person name="Goto S."/>
            <person name="Yabuzaki J."/>
            <person name="Kanehisa M."/>
            <person name="Yamashita A."/>
            <person name="Oshima K."/>
            <person name="Furuya K."/>
            <person name="Yoshino C."/>
            <person name="Shiba T."/>
            <person name="Hattori M."/>
            <person name="Ogasawara N."/>
            <person name="Hayashi H."/>
            <person name="Hiramatsu K."/>
        </authorList>
    </citation>
    <scope>NUCLEOTIDE SEQUENCE [LARGE SCALE GENOMIC DNA]</scope>
    <source>
        <strain>N315</strain>
    </source>
</reference>
<reference key="2">
    <citation type="submission" date="2007-10" db="UniProtKB">
        <title>Shotgun proteomic analysis of total and membrane protein extracts of S. aureus strain N315.</title>
        <authorList>
            <person name="Vaezzadeh A.R."/>
            <person name="Deshusses J."/>
            <person name="Lescuyer P."/>
            <person name="Hochstrasser D.F."/>
        </authorList>
    </citation>
    <scope>IDENTIFICATION BY MASS SPECTROMETRY [LARGE SCALE ANALYSIS]</scope>
    <source>
        <strain>N315</strain>
    </source>
</reference>
<keyword id="KW-1003">Cell membrane</keyword>
<keyword id="KW-0472">Membrane</keyword>
<keyword id="KW-0812">Transmembrane</keyword>
<keyword id="KW-1133">Transmembrane helix</keyword>
<organism>
    <name type="scientific">Staphylococcus aureus (strain N315)</name>
    <dbReference type="NCBI Taxonomy" id="158879"/>
    <lineage>
        <taxon>Bacteria</taxon>
        <taxon>Bacillati</taxon>
        <taxon>Bacillota</taxon>
        <taxon>Bacilli</taxon>
        <taxon>Bacillales</taxon>
        <taxon>Staphylococcaceae</taxon>
        <taxon>Staphylococcus</taxon>
    </lineage>
</organism>
<proteinExistence type="evidence at protein level"/>
<name>Y1560_STAAN</name>
<evidence type="ECO:0000255" key="1"/>
<evidence type="ECO:0000305" key="2"/>
<dbReference type="EMBL" id="BA000018">
    <property type="protein sequence ID" value="BAB42828.1"/>
    <property type="molecule type" value="Genomic_DNA"/>
</dbReference>
<dbReference type="PIR" id="G89958">
    <property type="entry name" value="G89958"/>
</dbReference>
<dbReference type="RefSeq" id="WP_000383814.1">
    <property type="nucleotide sequence ID" value="NC_002745.2"/>
</dbReference>
<dbReference type="SMR" id="Q7A531"/>
<dbReference type="EnsemblBacteria" id="BAB42828">
    <property type="protein sequence ID" value="BAB42828"/>
    <property type="gene ID" value="BAB42828"/>
</dbReference>
<dbReference type="KEGG" id="sau:SA1560"/>
<dbReference type="HOGENOM" id="CLU_115870_0_0_9"/>
<dbReference type="GO" id="GO:0005886">
    <property type="term" value="C:plasma membrane"/>
    <property type="evidence" value="ECO:0007669"/>
    <property type="project" value="UniProtKB-SubCell"/>
</dbReference>
<dbReference type="Gene3D" id="1.10.287.950">
    <property type="entry name" value="Methyl-accepting chemotaxis protein"/>
    <property type="match status" value="1"/>
</dbReference>
<dbReference type="InterPro" id="IPR009293">
    <property type="entry name" value="UPF0478"/>
</dbReference>
<dbReference type="PANTHER" id="PTHR40070">
    <property type="entry name" value="UPF0478 PROTEIN YTXG"/>
    <property type="match status" value="1"/>
</dbReference>
<dbReference type="PANTHER" id="PTHR40070:SF1">
    <property type="entry name" value="UPF0478 PROTEIN YTXG"/>
    <property type="match status" value="1"/>
</dbReference>
<dbReference type="Pfam" id="PF06103">
    <property type="entry name" value="DUF948"/>
    <property type="match status" value="1"/>
</dbReference>
<dbReference type="SUPFAM" id="SSF58104">
    <property type="entry name" value="Methyl-accepting chemotaxis protein (MCP) signaling domain"/>
    <property type="match status" value="1"/>
</dbReference>
<gene>
    <name type="ordered locus">SA1560</name>
</gene>
<comment type="subcellular location">
    <subcellularLocation>
        <location evidence="2">Cell membrane</location>
        <topology evidence="2">Single-pass membrane protein</topology>
    </subcellularLocation>
</comment>
<comment type="similarity">
    <text evidence="2">Belongs to the UPF0478 family.</text>
</comment>
<protein>
    <recommendedName>
        <fullName>UPF0478 protein SA1560</fullName>
    </recommendedName>
</protein>